<feature type="chain" id="PRO_0000241975" description="Arginine--tRNA ligase">
    <location>
        <begin position="1"/>
        <end position="598"/>
    </location>
</feature>
<feature type="region of interest" description="Disordered" evidence="2">
    <location>
        <begin position="288"/>
        <end position="309"/>
    </location>
</feature>
<feature type="short sequence motif" description="'HIGH' region">
    <location>
        <begin position="131"/>
        <end position="141"/>
    </location>
</feature>
<accession>Q2II14</accession>
<organism>
    <name type="scientific">Anaeromyxobacter dehalogenans (strain 2CP-C)</name>
    <dbReference type="NCBI Taxonomy" id="290397"/>
    <lineage>
        <taxon>Bacteria</taxon>
        <taxon>Pseudomonadati</taxon>
        <taxon>Myxococcota</taxon>
        <taxon>Myxococcia</taxon>
        <taxon>Myxococcales</taxon>
        <taxon>Cystobacterineae</taxon>
        <taxon>Anaeromyxobacteraceae</taxon>
        <taxon>Anaeromyxobacter</taxon>
    </lineage>
</organism>
<protein>
    <recommendedName>
        <fullName evidence="1">Arginine--tRNA ligase</fullName>
        <ecNumber evidence="1">6.1.1.19</ecNumber>
    </recommendedName>
    <alternativeName>
        <fullName evidence="1">Arginyl-tRNA synthetase</fullName>
        <shortName evidence="1">ArgRS</shortName>
    </alternativeName>
</protein>
<evidence type="ECO:0000255" key="1">
    <source>
        <dbReference type="HAMAP-Rule" id="MF_00123"/>
    </source>
</evidence>
<evidence type="ECO:0000256" key="2">
    <source>
        <dbReference type="SAM" id="MobiDB-lite"/>
    </source>
</evidence>
<sequence>MVRDRVIELFRKALAQGADDGRWPAADAGFSVEAPRDPKHGDFAVNAAMVLAKQAGKPPRELAQAIVEAVRAADTAGDLAGLEIAGPGFINVRLSPDLWLRTLARAVAEGPAYGRTAVGQGKKVIVEYVSANPTGPMHVGHGRNAVVGDGVQGLLRWAGFDVSREYYVNDYGAQVQTLARSVHLRYQELHGRAVTMPPKSYPGEYVKDIAAGLKAEYGARFLDAPEAEWLTLFRDHAVQHVLGMIREDLAAVNISFDRWSSEKALYESGTVDRFLRFLEEKDLVYVGKLPPPKSKKGQPPPQAQPDEEGVTAAEDLTLFRSSAYGDEVDRPVKKADGTPTYFCADIAYHWDKRQRADALVDVLGADHGGYVPRLEAAMEALGASRKDLHVVLIQMVSLMRGGESVKMSKRAGTLVSLREVVDEVGRDATRFIFLTRRSDAPLDFDVELAKKQTLDNPVFYVQYGHARLAAIFQKAREAGHAVPEFDLDAARTLGSPEEQDLIRRIAAFPDLLAAAALAYEPHRVAFYLQETIAAFHSWYTQGKKSGEKVIGPDPVKTAARLFLCRALKQVLANGLAVLGVSAPDRMESPETRDIADDV</sequence>
<gene>
    <name evidence="1" type="primary">argS</name>
    <name type="ordered locus">Adeh_1524</name>
</gene>
<proteinExistence type="inferred from homology"/>
<dbReference type="EC" id="6.1.1.19" evidence="1"/>
<dbReference type="EMBL" id="CP000251">
    <property type="protein sequence ID" value="ABC81297.1"/>
    <property type="molecule type" value="Genomic_DNA"/>
</dbReference>
<dbReference type="RefSeq" id="WP_011420580.1">
    <property type="nucleotide sequence ID" value="NC_007760.1"/>
</dbReference>
<dbReference type="SMR" id="Q2II14"/>
<dbReference type="STRING" id="290397.Adeh_1524"/>
<dbReference type="KEGG" id="ade:Adeh_1524"/>
<dbReference type="eggNOG" id="COG0018">
    <property type="taxonomic scope" value="Bacteria"/>
</dbReference>
<dbReference type="HOGENOM" id="CLU_006406_0_1_7"/>
<dbReference type="OrthoDB" id="9803211at2"/>
<dbReference type="Proteomes" id="UP000001935">
    <property type="component" value="Chromosome"/>
</dbReference>
<dbReference type="GO" id="GO:0005737">
    <property type="term" value="C:cytoplasm"/>
    <property type="evidence" value="ECO:0007669"/>
    <property type="project" value="UniProtKB-SubCell"/>
</dbReference>
<dbReference type="GO" id="GO:0004814">
    <property type="term" value="F:arginine-tRNA ligase activity"/>
    <property type="evidence" value="ECO:0007669"/>
    <property type="project" value="UniProtKB-UniRule"/>
</dbReference>
<dbReference type="GO" id="GO:0005524">
    <property type="term" value="F:ATP binding"/>
    <property type="evidence" value="ECO:0007669"/>
    <property type="project" value="UniProtKB-UniRule"/>
</dbReference>
<dbReference type="GO" id="GO:0006420">
    <property type="term" value="P:arginyl-tRNA aminoacylation"/>
    <property type="evidence" value="ECO:0007669"/>
    <property type="project" value="UniProtKB-UniRule"/>
</dbReference>
<dbReference type="CDD" id="cd00671">
    <property type="entry name" value="ArgRS_core"/>
    <property type="match status" value="1"/>
</dbReference>
<dbReference type="FunFam" id="1.10.730.10:FF:000008">
    <property type="entry name" value="Arginine--tRNA ligase"/>
    <property type="match status" value="1"/>
</dbReference>
<dbReference type="Gene3D" id="3.30.1360.70">
    <property type="entry name" value="Arginyl tRNA synthetase N-terminal domain"/>
    <property type="match status" value="1"/>
</dbReference>
<dbReference type="Gene3D" id="3.40.50.620">
    <property type="entry name" value="HUPs"/>
    <property type="match status" value="1"/>
</dbReference>
<dbReference type="Gene3D" id="1.10.730.10">
    <property type="entry name" value="Isoleucyl-tRNA Synthetase, Domain 1"/>
    <property type="match status" value="1"/>
</dbReference>
<dbReference type="HAMAP" id="MF_00123">
    <property type="entry name" value="Arg_tRNA_synth"/>
    <property type="match status" value="1"/>
</dbReference>
<dbReference type="InterPro" id="IPR001412">
    <property type="entry name" value="aa-tRNA-synth_I_CS"/>
</dbReference>
<dbReference type="InterPro" id="IPR001278">
    <property type="entry name" value="Arg-tRNA-ligase"/>
</dbReference>
<dbReference type="InterPro" id="IPR005148">
    <property type="entry name" value="Arg-tRNA-synth_N"/>
</dbReference>
<dbReference type="InterPro" id="IPR036695">
    <property type="entry name" value="Arg-tRNA-synth_N_sf"/>
</dbReference>
<dbReference type="InterPro" id="IPR035684">
    <property type="entry name" value="ArgRS_core"/>
</dbReference>
<dbReference type="InterPro" id="IPR008909">
    <property type="entry name" value="DALR_anticod-bd"/>
</dbReference>
<dbReference type="InterPro" id="IPR014729">
    <property type="entry name" value="Rossmann-like_a/b/a_fold"/>
</dbReference>
<dbReference type="InterPro" id="IPR009080">
    <property type="entry name" value="tRNAsynth_Ia_anticodon-bd"/>
</dbReference>
<dbReference type="PANTHER" id="PTHR11956:SF5">
    <property type="entry name" value="ARGININE--TRNA LIGASE, CYTOPLASMIC"/>
    <property type="match status" value="1"/>
</dbReference>
<dbReference type="PANTHER" id="PTHR11956">
    <property type="entry name" value="ARGINYL-TRNA SYNTHETASE"/>
    <property type="match status" value="1"/>
</dbReference>
<dbReference type="Pfam" id="PF03485">
    <property type="entry name" value="Arg_tRNA_synt_N"/>
    <property type="match status" value="1"/>
</dbReference>
<dbReference type="Pfam" id="PF05746">
    <property type="entry name" value="DALR_1"/>
    <property type="match status" value="1"/>
</dbReference>
<dbReference type="Pfam" id="PF00750">
    <property type="entry name" value="tRNA-synt_1d"/>
    <property type="match status" value="1"/>
</dbReference>
<dbReference type="PRINTS" id="PR01038">
    <property type="entry name" value="TRNASYNTHARG"/>
</dbReference>
<dbReference type="SMART" id="SM01016">
    <property type="entry name" value="Arg_tRNA_synt_N"/>
    <property type="match status" value="1"/>
</dbReference>
<dbReference type="SMART" id="SM00836">
    <property type="entry name" value="DALR_1"/>
    <property type="match status" value="1"/>
</dbReference>
<dbReference type="SUPFAM" id="SSF47323">
    <property type="entry name" value="Anticodon-binding domain of a subclass of class I aminoacyl-tRNA synthetases"/>
    <property type="match status" value="1"/>
</dbReference>
<dbReference type="SUPFAM" id="SSF55190">
    <property type="entry name" value="Arginyl-tRNA synthetase (ArgRS), N-terminal 'additional' domain"/>
    <property type="match status" value="1"/>
</dbReference>
<dbReference type="SUPFAM" id="SSF52374">
    <property type="entry name" value="Nucleotidylyl transferase"/>
    <property type="match status" value="1"/>
</dbReference>
<dbReference type="PROSITE" id="PS00178">
    <property type="entry name" value="AA_TRNA_LIGASE_I"/>
    <property type="match status" value="1"/>
</dbReference>
<comment type="catalytic activity">
    <reaction evidence="1">
        <text>tRNA(Arg) + L-arginine + ATP = L-arginyl-tRNA(Arg) + AMP + diphosphate</text>
        <dbReference type="Rhea" id="RHEA:20301"/>
        <dbReference type="Rhea" id="RHEA-COMP:9658"/>
        <dbReference type="Rhea" id="RHEA-COMP:9673"/>
        <dbReference type="ChEBI" id="CHEBI:30616"/>
        <dbReference type="ChEBI" id="CHEBI:32682"/>
        <dbReference type="ChEBI" id="CHEBI:33019"/>
        <dbReference type="ChEBI" id="CHEBI:78442"/>
        <dbReference type="ChEBI" id="CHEBI:78513"/>
        <dbReference type="ChEBI" id="CHEBI:456215"/>
        <dbReference type="EC" id="6.1.1.19"/>
    </reaction>
</comment>
<comment type="subunit">
    <text evidence="1">Monomer.</text>
</comment>
<comment type="subcellular location">
    <subcellularLocation>
        <location evidence="1">Cytoplasm</location>
    </subcellularLocation>
</comment>
<comment type="similarity">
    <text evidence="1">Belongs to the class-I aminoacyl-tRNA synthetase family.</text>
</comment>
<keyword id="KW-0030">Aminoacyl-tRNA synthetase</keyword>
<keyword id="KW-0067">ATP-binding</keyword>
<keyword id="KW-0963">Cytoplasm</keyword>
<keyword id="KW-0436">Ligase</keyword>
<keyword id="KW-0547">Nucleotide-binding</keyword>
<keyword id="KW-0648">Protein biosynthesis</keyword>
<keyword id="KW-1185">Reference proteome</keyword>
<reference key="1">
    <citation type="submission" date="2006-01" db="EMBL/GenBank/DDBJ databases">
        <title>Complete sequence of Anaeromyxobacter dehalogenans 2CP-C.</title>
        <authorList>
            <person name="Copeland A."/>
            <person name="Lucas S."/>
            <person name="Lapidus A."/>
            <person name="Barry K."/>
            <person name="Detter J.C."/>
            <person name="Glavina T."/>
            <person name="Hammon N."/>
            <person name="Israni S."/>
            <person name="Pitluck S."/>
            <person name="Brettin T."/>
            <person name="Bruce D."/>
            <person name="Han C."/>
            <person name="Tapia R."/>
            <person name="Gilna P."/>
            <person name="Kiss H."/>
            <person name="Schmutz J."/>
            <person name="Larimer F."/>
            <person name="Land M."/>
            <person name="Kyrpides N."/>
            <person name="Anderson I."/>
            <person name="Sanford R.A."/>
            <person name="Ritalahti K.M."/>
            <person name="Thomas H.S."/>
            <person name="Kirby J.R."/>
            <person name="Zhulin I.B."/>
            <person name="Loeffler F.E."/>
            <person name="Richardson P."/>
        </authorList>
    </citation>
    <scope>NUCLEOTIDE SEQUENCE [LARGE SCALE GENOMIC DNA]</scope>
    <source>
        <strain>2CP-C</strain>
    </source>
</reference>
<name>SYR_ANADE</name>